<reference key="1">
    <citation type="journal article" date="2017" name="BMC Genomics">
        <title>Chromosome level assembly and secondary metabolite potential of the parasitic fungus Cordyceps militaris.</title>
        <authorList>
            <person name="Kramer G.J."/>
            <person name="Nodwell J.R."/>
        </authorList>
    </citation>
    <scope>NUCLEOTIDE SEQUENCE [LARGE SCALE GENOMIC DNA]</scope>
    <source>
        <strain>ATCC 34164</strain>
    </source>
</reference>
<reference key="2">
    <citation type="journal article" date="2021" name="Int. J. Mol. Sci.">
        <title>Cysteine-Rich Hydrophobin Gene Family: Genome Wide Analysis, Phylogeny and Transcript Profiling in Cordyceps militaris.</title>
        <authorList>
            <person name="Li X."/>
            <person name="Wang F."/>
            <person name="Xu Y."/>
            <person name="Liu G."/>
            <person name="Dong C."/>
        </authorList>
    </citation>
    <scope>FUNCTION</scope>
    <scope>INDUCTION</scope>
</reference>
<name>HYD3_CORMI</name>
<feature type="signal peptide" evidence="2">
    <location>
        <begin position="1"/>
        <end position="16"/>
    </location>
</feature>
<feature type="chain" id="PRO_5013985570" description="Class I hydrophobin 3">
    <location>
        <begin position="17"/>
        <end position="138"/>
    </location>
</feature>
<feature type="disulfide bond" evidence="1">
    <location>
        <begin position="40"/>
        <end position="111"/>
    </location>
</feature>
<feature type="disulfide bond" evidence="1">
    <location>
        <begin position="48"/>
        <end position="105"/>
    </location>
</feature>
<feature type="disulfide bond" evidence="1">
    <location>
        <begin position="49"/>
        <end position="87"/>
    </location>
</feature>
<feature type="disulfide bond" evidence="1">
    <location>
        <begin position="112"/>
        <end position="130"/>
    </location>
</feature>
<proteinExistence type="evidence at transcript level"/>
<accession>A0A2H4SKW2</accession>
<evidence type="ECO:0000250" key="1">
    <source>
        <dbReference type="UniProtKB" id="P16933"/>
    </source>
</evidence>
<evidence type="ECO:0000255" key="2"/>
<evidence type="ECO:0000269" key="3">
    <source>
    </source>
</evidence>
<evidence type="ECO:0000303" key="4">
    <source>
    </source>
</evidence>
<evidence type="ECO:0000305" key="5"/>
<keyword id="KW-0134">Cell wall</keyword>
<keyword id="KW-0183">Conidiation</keyword>
<keyword id="KW-1015">Disulfide bond</keyword>
<keyword id="KW-0964">Secreted</keyword>
<keyword id="KW-0732">Signal</keyword>
<keyword id="KW-0749">Sporulation</keyword>
<sequence>MRFFLAITALVAAVTAAPSADVAAVNQMAAMTLAEADASCGNGASLYCCDKSKQGGDTGSPGQAGGVGLLGAIVGVNGLLQGLLGQCSKININAIGAAGVLNQECTARAACCQNTPSVAHHGLVNIALPCIPINSLVG</sequence>
<organism>
    <name type="scientific">Cordyceps militaris</name>
    <name type="common">Caterpillar fungus</name>
    <name type="synonym">Clavaria militaris</name>
    <dbReference type="NCBI Taxonomy" id="73501"/>
    <lineage>
        <taxon>Eukaryota</taxon>
        <taxon>Fungi</taxon>
        <taxon>Dikarya</taxon>
        <taxon>Ascomycota</taxon>
        <taxon>Pezizomycotina</taxon>
        <taxon>Sordariomycetes</taxon>
        <taxon>Hypocreomycetidae</taxon>
        <taxon>Hypocreales</taxon>
        <taxon>Cordycipitaceae</taxon>
        <taxon>Cordyceps</taxon>
    </lineage>
</organism>
<dbReference type="EMBL" id="CP023324">
    <property type="protein sequence ID" value="ATY63719.1"/>
    <property type="molecule type" value="Genomic_DNA"/>
</dbReference>
<dbReference type="SMR" id="A0A2H4SKW2"/>
<dbReference type="VEuPathDB" id="FungiDB:A9K55_008043"/>
<dbReference type="VEuPathDB" id="FungiDB:CCM_06862"/>
<dbReference type="OMA" id="DNMTVKQ"/>
<dbReference type="OrthoDB" id="8437at474943"/>
<dbReference type="Proteomes" id="UP000323067">
    <property type="component" value="Chromosome vii"/>
</dbReference>
<dbReference type="GO" id="GO:0005576">
    <property type="term" value="C:extracellular region"/>
    <property type="evidence" value="ECO:0007669"/>
    <property type="project" value="UniProtKB-KW"/>
</dbReference>
<dbReference type="GO" id="GO:0009277">
    <property type="term" value="C:fungal-type cell wall"/>
    <property type="evidence" value="ECO:0007669"/>
    <property type="project" value="InterPro"/>
</dbReference>
<dbReference type="GO" id="GO:0005199">
    <property type="term" value="F:structural constituent of cell wall"/>
    <property type="evidence" value="ECO:0007669"/>
    <property type="project" value="InterPro"/>
</dbReference>
<dbReference type="CDD" id="cd23507">
    <property type="entry name" value="hydrophobin_I"/>
    <property type="match status" value="1"/>
</dbReference>
<dbReference type="InterPro" id="IPR001338">
    <property type="entry name" value="Hydrophobin"/>
</dbReference>
<dbReference type="Pfam" id="PF01185">
    <property type="entry name" value="Hydrophobin"/>
    <property type="match status" value="1"/>
</dbReference>
<dbReference type="SMART" id="SM00075">
    <property type="entry name" value="HYDRO"/>
    <property type="match status" value="1"/>
</dbReference>
<protein>
    <recommendedName>
        <fullName evidence="4">Class I hydrophobin 3</fullName>
    </recommendedName>
</protein>
<comment type="function">
    <text evidence="3 5">Aerial growth, conidiation, and dispersal of filamentous fungi in the environment rely upon a capability of their secreting small amphipathic proteins called hydrophobins (HPBs) with low sequence identity. Class I can self-assemble into an outermost layer of rodlet bundles on aerial cell surfaces, conferring cellular hydrophobicity that supports fungal growth, development and dispersal; whereas Class II form highly ordered films at water-air interfaces through intermolecular interactions but contribute nothing to the rodlet structure (Probable). HYD3 is a class I hydrophobin that contributes to the formation of aerial hyphae and fruiting bodies (PubMed:33440688).</text>
</comment>
<comment type="subunit">
    <text evidence="1">Self-assembles to form functional amyloid fibrils called rodlets. Self-assembly into fibrillar rodlets occurs spontaneously at hydrophobic:hydrophilic interfaces and the rodlets further associate laterally to form amphipathic monolayers.</text>
</comment>
<comment type="subcellular location">
    <subcellularLocation>
        <location evidence="1">Secreted</location>
    </subcellularLocation>
    <subcellularLocation>
        <location evidence="1">Secreted</location>
        <location evidence="1">Cell wall</location>
    </subcellularLocation>
</comment>
<comment type="induction">
    <text evidence="3">Highly expressed during the whole fruiting body development with a 3.66-fold increase at the ST (sclerotium) stage compared with the HY (hypha) stage (PubMed:33440688). Expression responds positively to light irradiation (PubMed:33440688).</text>
</comment>
<comment type="similarity">
    <text evidence="5">Belongs to the fungal hydrophobin family.</text>
</comment>
<gene>
    <name evidence="4" type="primary">HYD3</name>
    <name type="ORF">A9K55_008043</name>
</gene>